<dbReference type="EC" id="4.1.1.48" evidence="1"/>
<dbReference type="EMBL" id="CP000688">
    <property type="protein sequence ID" value="ABQ17853.1"/>
    <property type="molecule type" value="Genomic_DNA"/>
</dbReference>
<dbReference type="SMR" id="A5FPM3"/>
<dbReference type="KEGG" id="deb:DehaBAV1_1274"/>
<dbReference type="PATRIC" id="fig|216389.18.peg.1343"/>
<dbReference type="HOGENOM" id="CLU_034247_2_0_0"/>
<dbReference type="UniPathway" id="UPA00035">
    <property type="reaction ID" value="UER00043"/>
</dbReference>
<dbReference type="GO" id="GO:0004425">
    <property type="term" value="F:indole-3-glycerol-phosphate synthase activity"/>
    <property type="evidence" value="ECO:0007669"/>
    <property type="project" value="UniProtKB-UniRule"/>
</dbReference>
<dbReference type="GO" id="GO:0004640">
    <property type="term" value="F:phosphoribosylanthranilate isomerase activity"/>
    <property type="evidence" value="ECO:0007669"/>
    <property type="project" value="TreeGrafter"/>
</dbReference>
<dbReference type="GO" id="GO:0000162">
    <property type="term" value="P:L-tryptophan biosynthetic process"/>
    <property type="evidence" value="ECO:0007669"/>
    <property type="project" value="UniProtKB-UniRule"/>
</dbReference>
<dbReference type="CDD" id="cd00331">
    <property type="entry name" value="IGPS"/>
    <property type="match status" value="1"/>
</dbReference>
<dbReference type="FunFam" id="3.20.20.70:FF:000024">
    <property type="entry name" value="Indole-3-glycerol phosphate synthase"/>
    <property type="match status" value="1"/>
</dbReference>
<dbReference type="Gene3D" id="3.20.20.70">
    <property type="entry name" value="Aldolase class I"/>
    <property type="match status" value="1"/>
</dbReference>
<dbReference type="HAMAP" id="MF_00134_B">
    <property type="entry name" value="IGPS_B"/>
    <property type="match status" value="1"/>
</dbReference>
<dbReference type="InterPro" id="IPR013785">
    <property type="entry name" value="Aldolase_TIM"/>
</dbReference>
<dbReference type="InterPro" id="IPR045186">
    <property type="entry name" value="Indole-3-glycerol_P_synth"/>
</dbReference>
<dbReference type="InterPro" id="IPR013798">
    <property type="entry name" value="Indole-3-glycerol_P_synth_dom"/>
</dbReference>
<dbReference type="InterPro" id="IPR001468">
    <property type="entry name" value="Indole-3-GlycerolPSynthase_CS"/>
</dbReference>
<dbReference type="InterPro" id="IPR011060">
    <property type="entry name" value="RibuloseP-bd_barrel"/>
</dbReference>
<dbReference type="NCBIfam" id="NF001377">
    <property type="entry name" value="PRK00278.2-4"/>
    <property type="match status" value="1"/>
</dbReference>
<dbReference type="PANTHER" id="PTHR22854:SF2">
    <property type="entry name" value="INDOLE-3-GLYCEROL-PHOSPHATE SYNTHASE"/>
    <property type="match status" value="1"/>
</dbReference>
<dbReference type="PANTHER" id="PTHR22854">
    <property type="entry name" value="TRYPTOPHAN BIOSYNTHESIS PROTEIN"/>
    <property type="match status" value="1"/>
</dbReference>
<dbReference type="Pfam" id="PF00218">
    <property type="entry name" value="IGPS"/>
    <property type="match status" value="1"/>
</dbReference>
<dbReference type="SUPFAM" id="SSF51366">
    <property type="entry name" value="Ribulose-phoshate binding barrel"/>
    <property type="match status" value="1"/>
</dbReference>
<dbReference type="PROSITE" id="PS00614">
    <property type="entry name" value="IGPS"/>
    <property type="match status" value="1"/>
</dbReference>
<keyword id="KW-0028">Amino-acid biosynthesis</keyword>
<keyword id="KW-0057">Aromatic amino acid biosynthesis</keyword>
<keyword id="KW-0210">Decarboxylase</keyword>
<keyword id="KW-0456">Lyase</keyword>
<keyword id="KW-0822">Tryptophan biosynthesis</keyword>
<name>TRPC_DEHMB</name>
<comment type="catalytic activity">
    <reaction evidence="1">
        <text>1-(2-carboxyphenylamino)-1-deoxy-D-ribulose 5-phosphate + H(+) = (1S,2R)-1-C-(indol-3-yl)glycerol 3-phosphate + CO2 + H2O</text>
        <dbReference type="Rhea" id="RHEA:23476"/>
        <dbReference type="ChEBI" id="CHEBI:15377"/>
        <dbReference type="ChEBI" id="CHEBI:15378"/>
        <dbReference type="ChEBI" id="CHEBI:16526"/>
        <dbReference type="ChEBI" id="CHEBI:58613"/>
        <dbReference type="ChEBI" id="CHEBI:58866"/>
        <dbReference type="EC" id="4.1.1.48"/>
    </reaction>
</comment>
<comment type="pathway">
    <text evidence="1">Amino-acid biosynthesis; L-tryptophan biosynthesis; L-tryptophan from chorismate: step 4/5.</text>
</comment>
<comment type="similarity">
    <text evidence="1">Belongs to the TrpC family.</text>
</comment>
<accession>A5FPM3</accession>
<proteinExistence type="inferred from homology"/>
<evidence type="ECO:0000255" key="1">
    <source>
        <dbReference type="HAMAP-Rule" id="MF_00134"/>
    </source>
</evidence>
<sequence>MILERIVTDNLPDLERRKMRLPLAKLQELVLDIPYPPIDMAMKLKGRQVRLIAEVKKASPSKGIIRPDFDPVDIAGIYARNGASAISVLTEEHHFMGSLDNLKKIRESGVASKLPLLRKDFIHDPYQVYESRLYGADAILLIVAMLSPERLQELLSLSHKLGMKCLVEVHTRSELEIALESNARIIGLNNRDLHTFKIDLTVTERLRPLIPPECIVVSESGIQTRADISRLEELGVDAVLVGEALTASVDIAAKMRKLL</sequence>
<protein>
    <recommendedName>
        <fullName evidence="1">Indole-3-glycerol phosphate synthase</fullName>
        <shortName evidence="1">IGPS</shortName>
        <ecNumber evidence="1">4.1.1.48</ecNumber>
    </recommendedName>
</protein>
<organism>
    <name type="scientific">Dehalococcoides mccartyi (strain ATCC BAA-2100 / JCM 16839 / KCTC 5957 / BAV1)</name>
    <dbReference type="NCBI Taxonomy" id="216389"/>
    <lineage>
        <taxon>Bacteria</taxon>
        <taxon>Bacillati</taxon>
        <taxon>Chloroflexota</taxon>
        <taxon>Dehalococcoidia</taxon>
        <taxon>Dehalococcoidales</taxon>
        <taxon>Dehalococcoidaceae</taxon>
        <taxon>Dehalococcoides</taxon>
    </lineage>
</organism>
<gene>
    <name evidence="1" type="primary">trpC</name>
    <name type="ordered locus">DehaBAV1_1274</name>
</gene>
<feature type="chain" id="PRO_1000076418" description="Indole-3-glycerol phosphate synthase">
    <location>
        <begin position="1"/>
        <end position="259"/>
    </location>
</feature>
<reference key="1">
    <citation type="submission" date="2007-05" db="EMBL/GenBank/DDBJ databases">
        <title>Complete sequence of Dehalococcoides sp. BAV1.</title>
        <authorList>
            <consortium name="US DOE Joint Genome Institute"/>
            <person name="Copeland A."/>
            <person name="Lucas S."/>
            <person name="Lapidus A."/>
            <person name="Barry K."/>
            <person name="Detter J.C."/>
            <person name="Glavina del Rio T."/>
            <person name="Hammon N."/>
            <person name="Israni S."/>
            <person name="Pitluck S."/>
            <person name="Lowry S."/>
            <person name="Clum A."/>
            <person name="Schmutz J."/>
            <person name="Larimer F."/>
            <person name="Land M."/>
            <person name="Hauser L."/>
            <person name="Kyrpides N."/>
            <person name="Kim E."/>
            <person name="Ritalahti K.M."/>
            <person name="Loeffler F."/>
            <person name="Richardson P."/>
        </authorList>
    </citation>
    <scope>NUCLEOTIDE SEQUENCE [LARGE SCALE GENOMIC DNA]</scope>
    <source>
        <strain>ATCC BAA-2100 / JCM 16839 / KCTC 5957 / BAV1</strain>
    </source>
</reference>